<feature type="transit peptide" description="Mitochondrion">
    <location>
        <begin position="1"/>
        <end position="38"/>
    </location>
</feature>
<feature type="chain" id="PRO_0000029899" description="Carbamoyl-phosphate synthase [ammonia], mitochondrial">
    <location>
        <begin position="39"/>
        <end position="1500"/>
    </location>
</feature>
<feature type="domain" description="Glutamine amidotransferase type-1">
    <location>
        <begin position="219"/>
        <end position="404"/>
    </location>
</feature>
<feature type="domain" description="ATP-grasp 1">
    <location>
        <begin position="551"/>
        <end position="743"/>
    </location>
</feature>
<feature type="domain" description="ATP-grasp 2">
    <location>
        <begin position="1093"/>
        <end position="1284"/>
    </location>
</feature>
<feature type="domain" description="MGS-like" evidence="3">
    <location>
        <begin position="1355"/>
        <end position="1500"/>
    </location>
</feature>
<feature type="region of interest" description="Anthranilate phosphoribosyltransferase homolog">
    <location>
        <begin position="39"/>
        <end position="218"/>
    </location>
</feature>
<feature type="binding site">
    <location>
        <position position="1391"/>
    </location>
    <ligand>
        <name>N-acetyl-L-glutamate</name>
        <dbReference type="ChEBI" id="CHEBI:44337"/>
        <note>allosteric activator</note>
    </ligand>
</feature>
<feature type="binding site">
    <location>
        <position position="1394"/>
    </location>
    <ligand>
        <name>N-acetyl-L-glutamate</name>
        <dbReference type="ChEBI" id="CHEBI:44337"/>
        <note>allosteric activator</note>
    </ligand>
</feature>
<feature type="binding site">
    <location>
        <position position="1410"/>
    </location>
    <ligand>
        <name>N-acetyl-L-glutamate</name>
        <dbReference type="ChEBI" id="CHEBI:44337"/>
        <note>allosteric activator</note>
    </ligand>
</feature>
<feature type="binding site">
    <location>
        <position position="1437"/>
    </location>
    <ligand>
        <name>N-acetyl-L-glutamate</name>
        <dbReference type="ChEBI" id="CHEBI:44337"/>
        <note>allosteric activator</note>
    </ligand>
</feature>
<feature type="binding site">
    <location>
        <position position="1440"/>
    </location>
    <ligand>
        <name>N-acetyl-L-glutamate</name>
        <dbReference type="ChEBI" id="CHEBI:44337"/>
        <note>allosteric activator</note>
    </ligand>
</feature>
<feature type="binding site">
    <location>
        <position position="1449"/>
    </location>
    <ligand>
        <name>N-acetyl-L-glutamate</name>
        <dbReference type="ChEBI" id="CHEBI:44337"/>
        <note>allosteric activator</note>
    </ligand>
</feature>
<feature type="modified residue" description="N6-acetyllysine; alternate" evidence="2">
    <location>
        <position position="55"/>
    </location>
</feature>
<feature type="modified residue" description="N6-glutaryllysine; alternate" evidence="1">
    <location>
        <position position="55"/>
    </location>
</feature>
<feature type="modified residue" description="N6-succinyllysine; alternate" evidence="2">
    <location>
        <position position="55"/>
    </location>
</feature>
<feature type="modified residue" description="N6-acetyllysine; alternate" evidence="2">
    <location>
        <position position="57"/>
    </location>
</feature>
<feature type="modified residue" description="N6-succinyllysine; alternate" evidence="2">
    <location>
        <position position="57"/>
    </location>
</feature>
<feature type="modified residue" description="N6-acetyllysine; alternate" evidence="2">
    <location>
        <position position="119"/>
    </location>
</feature>
<feature type="modified residue" description="N6-succinyllysine; alternate" evidence="2">
    <location>
        <position position="119"/>
    </location>
</feature>
<feature type="modified residue" description="Phosphoserine" evidence="8">
    <location>
        <position position="148"/>
    </location>
</feature>
<feature type="modified residue" description="N6-acetyllysine; alternate" evidence="2">
    <location>
        <position position="157"/>
    </location>
</feature>
<feature type="modified residue" description="N6-succinyllysine; alternate" evidence="2">
    <location>
        <position position="157"/>
    </location>
</feature>
<feature type="modified residue" description="N6-acetyllysine; alternate" evidence="2">
    <location>
        <position position="171"/>
    </location>
</feature>
<feature type="modified residue" description="N6-glutaryllysine; alternate" evidence="1">
    <location>
        <position position="171"/>
    </location>
</feature>
<feature type="modified residue" description="N6-glutaryllysine" evidence="1">
    <location>
        <position position="176"/>
    </location>
</feature>
<feature type="modified residue" description="N6-acetyllysine" evidence="2">
    <location>
        <position position="182"/>
    </location>
</feature>
<feature type="modified residue" description="Phosphoserine" evidence="8">
    <location>
        <position position="189"/>
    </location>
</feature>
<feature type="modified residue" description="N6-acetyllysine" evidence="2">
    <location>
        <position position="197"/>
    </location>
</feature>
<feature type="modified residue" description="N6-acetyllysine; alternate" evidence="2">
    <location>
        <position position="207"/>
    </location>
</feature>
<feature type="modified residue" description="N6-glutaryllysine; alternate" evidence="1">
    <location>
        <position position="207"/>
    </location>
</feature>
<feature type="modified residue" description="N6-succinyllysine; alternate" evidence="2">
    <location>
        <position position="207"/>
    </location>
</feature>
<feature type="modified residue" description="N6-acetyllysine; alternate" evidence="2">
    <location>
        <position position="210"/>
    </location>
</feature>
<feature type="modified residue" description="N6-glutaryllysine; alternate" evidence="1">
    <location>
        <position position="210"/>
    </location>
</feature>
<feature type="modified residue" description="N6-acetyllysine; alternate" evidence="2">
    <location>
        <position position="214"/>
    </location>
</feature>
<feature type="modified residue" description="N6-glutaryllysine; alternate" evidence="1">
    <location>
        <position position="214"/>
    </location>
</feature>
<feature type="modified residue" description="N6-succinyllysine; alternate" evidence="2">
    <location>
        <position position="214"/>
    </location>
</feature>
<feature type="modified residue" description="N6-acetyllysine; alternate" evidence="2">
    <location>
        <position position="219"/>
    </location>
</feature>
<feature type="modified residue" description="N6-glutaryllysine; alternate" evidence="1">
    <location>
        <position position="219"/>
    </location>
</feature>
<feature type="modified residue" description="N6-acetyllysine; alternate" evidence="2">
    <location>
        <position position="228"/>
    </location>
</feature>
<feature type="modified residue" description="N6-glutaryllysine; alternate" evidence="1">
    <location>
        <position position="228"/>
    </location>
</feature>
<feature type="modified residue" description="N6-glutaryllysine" evidence="1">
    <location>
        <position position="237"/>
    </location>
</feature>
<feature type="modified residue" description="N6-acetyllysine" evidence="2">
    <location>
        <position position="279"/>
    </location>
</feature>
<feature type="modified residue" description="N6-acetyllysine; alternate" evidence="2">
    <location>
        <position position="280"/>
    </location>
</feature>
<feature type="modified residue" description="N6-glutaryllysine; alternate" evidence="1">
    <location>
        <position position="280"/>
    </location>
</feature>
<feature type="modified residue" description="N6-acetyllysine; alternate" evidence="2">
    <location>
        <position position="287"/>
    </location>
</feature>
<feature type="modified residue" description="N6-succinyllysine; alternate" evidence="2">
    <location>
        <position position="287"/>
    </location>
</feature>
<feature type="modified residue" description="N6-acetyllysine; alternate" evidence="2">
    <location>
        <position position="307"/>
    </location>
</feature>
<feature type="modified residue" description="N6-glutaryllysine; alternate" evidence="1">
    <location>
        <position position="307"/>
    </location>
</feature>
<feature type="modified residue" description="N6-succinyllysine; alternate" evidence="2">
    <location>
        <position position="307"/>
    </location>
</feature>
<feature type="modified residue" description="N6-acetyllysine; alternate" evidence="2">
    <location>
        <position position="310"/>
    </location>
</feature>
<feature type="modified residue" description="N6-glutaryllysine; alternate" evidence="1">
    <location>
        <position position="310"/>
    </location>
</feature>
<feature type="modified residue" description="N6-succinyllysine" evidence="2">
    <location>
        <position position="400"/>
    </location>
</feature>
<feature type="modified residue" description="N6-glutaryllysine; alternate" evidence="1">
    <location>
        <position position="402"/>
    </location>
</feature>
<feature type="modified residue" description="N6-succinyllysine; alternate" evidence="2">
    <location>
        <position position="402"/>
    </location>
</feature>
<feature type="modified residue" description="N6-acetyllysine; alternate" evidence="2">
    <location>
        <position position="412"/>
    </location>
</feature>
<feature type="modified residue" description="N6-glutaryllysine; alternate" evidence="1">
    <location>
        <position position="412"/>
    </location>
</feature>
<feature type="modified residue" description="N6-succinyllysine; alternate" evidence="2">
    <location>
        <position position="412"/>
    </location>
</feature>
<feature type="modified residue" description="N6-acetyllysine; alternate" evidence="2">
    <location>
        <position position="453"/>
    </location>
</feature>
<feature type="modified residue" description="N6-glutaryllysine; alternate" evidence="1">
    <location>
        <position position="453"/>
    </location>
</feature>
<feature type="modified residue" description="N6-acetyllysine; alternate" evidence="2">
    <location>
        <position position="458"/>
    </location>
</feature>
<feature type="modified residue" description="N6-glutaryllysine; alternate" evidence="1">
    <location>
        <position position="458"/>
    </location>
</feature>
<feature type="modified residue" description="N6-succinyllysine; alternate" evidence="2">
    <location>
        <position position="458"/>
    </location>
</feature>
<feature type="modified residue" description="N6-acetyllysine; alternate" evidence="2">
    <location>
        <position position="522"/>
    </location>
</feature>
<feature type="modified residue" description="N6-succinyllysine; alternate" evidence="2">
    <location>
        <position position="522"/>
    </location>
</feature>
<feature type="modified residue" description="N6-acetyllysine; alternate" evidence="2">
    <location>
        <position position="527"/>
    </location>
</feature>
<feature type="modified residue" description="N6-glutaryllysine; alternate" evidence="1">
    <location>
        <position position="527"/>
    </location>
</feature>
<feature type="modified residue" description="N6-succinyllysine; alternate" evidence="2">
    <location>
        <position position="527"/>
    </location>
</feature>
<feature type="modified residue" description="N6-acetyllysine; alternate" evidence="2">
    <location>
        <position position="532"/>
    </location>
</feature>
<feature type="modified residue" description="N6-glutaryllysine; alternate" evidence="1">
    <location>
        <position position="532"/>
    </location>
</feature>
<feature type="modified residue" description="Phosphoserine; alternate" evidence="8">
    <location>
        <position position="537"/>
    </location>
</feature>
<feature type="modified residue" description="Phosphoserine" evidence="8">
    <location>
        <position position="540"/>
    </location>
</feature>
<feature type="modified residue" description="N6-acetyllysine; alternate" evidence="2">
    <location>
        <position position="553"/>
    </location>
</feature>
<feature type="modified residue" description="N6-glutaryllysine; alternate" evidence="1">
    <location>
        <position position="553"/>
    </location>
</feature>
<feature type="modified residue" description="N6-succinyllysine; alternate" evidence="2">
    <location>
        <position position="553"/>
    </location>
</feature>
<feature type="modified residue" description="N6-acetyllysine; alternate" evidence="2">
    <location>
        <position position="560"/>
    </location>
</feature>
<feature type="modified residue" description="N6-succinyllysine; alternate" evidence="2">
    <location>
        <position position="560"/>
    </location>
</feature>
<feature type="modified residue" description="Phosphoserine" evidence="1">
    <location>
        <position position="569"/>
    </location>
</feature>
<feature type="modified residue" description="N6-acetyllysine; alternate" evidence="2">
    <location>
        <position position="575"/>
    </location>
</feature>
<feature type="modified residue" description="N6-succinyllysine; alternate" evidence="2">
    <location>
        <position position="575"/>
    </location>
</feature>
<feature type="modified residue" description="N6-acetyllysine; alternate" evidence="2">
    <location>
        <position position="603"/>
    </location>
</feature>
<feature type="modified residue" description="N6-succinyllysine; alternate" evidence="2">
    <location>
        <position position="603"/>
    </location>
</feature>
<feature type="modified residue" description="N6-acetyllysine; alternate" evidence="2">
    <location>
        <position position="612"/>
    </location>
</feature>
<feature type="modified residue" description="N6-succinyllysine; alternate" evidence="2">
    <location>
        <position position="612"/>
    </location>
</feature>
<feature type="modified residue" description="N6-acetyllysine" evidence="2">
    <location>
        <position position="630"/>
    </location>
</feature>
<feature type="modified residue" description="N6-glutaryllysine" evidence="1">
    <location>
        <position position="728"/>
    </location>
</feature>
<feature type="modified residue" description="N6-acetyllysine; alternate" evidence="2">
    <location>
        <position position="751"/>
    </location>
</feature>
<feature type="modified residue" description="N6-succinyllysine; alternate" evidence="2">
    <location>
        <position position="751"/>
    </location>
</feature>
<feature type="modified residue" description="N6-acetyllysine; alternate" evidence="2">
    <location>
        <position position="757"/>
    </location>
</feature>
<feature type="modified residue" description="N6-glutaryllysine; alternate" evidence="1">
    <location>
        <position position="757"/>
    </location>
</feature>
<feature type="modified residue" description="N6-succinyllysine; alternate" evidence="2">
    <location>
        <position position="757"/>
    </location>
</feature>
<feature type="modified residue" description="N6-acetyllysine; alternate" evidence="2">
    <location>
        <position position="772"/>
    </location>
</feature>
<feature type="modified residue" description="N6-glutaryllysine; alternate" evidence="1">
    <location>
        <position position="772"/>
    </location>
</feature>
<feature type="modified residue" description="N6-acetyllysine; alternate" evidence="2">
    <location>
        <position position="793"/>
    </location>
</feature>
<feature type="modified residue" description="N6-glutaryllysine; alternate" evidence="1">
    <location>
        <position position="793"/>
    </location>
</feature>
<feature type="modified residue" description="N6-succinyllysine; alternate" evidence="2">
    <location>
        <position position="793"/>
    </location>
</feature>
<feature type="modified residue" description="N6-acetyllysine; alternate" evidence="2">
    <location>
        <position position="811"/>
    </location>
</feature>
<feature type="modified residue" description="N6-glutaryllysine; alternate" evidence="1">
    <location>
        <position position="811"/>
    </location>
</feature>
<feature type="modified residue" description="N6-acetyllysine; alternate" evidence="2">
    <location>
        <position position="831"/>
    </location>
</feature>
<feature type="modified residue" description="N6-succinyllysine; alternate" evidence="2">
    <location>
        <position position="831"/>
    </location>
</feature>
<feature type="modified residue" description="N6-acetyllysine; alternate" evidence="2">
    <location>
        <position position="841"/>
    </location>
</feature>
<feature type="modified residue" description="N6-glutaryllysine; alternate" evidence="1">
    <location>
        <position position="841"/>
    </location>
</feature>
<feature type="modified residue" description="N6-acetyllysine; alternate" evidence="2">
    <location>
        <position position="856"/>
    </location>
</feature>
<feature type="modified residue" description="N6-glutaryllysine; alternate" evidence="1">
    <location>
        <position position="856"/>
    </location>
</feature>
<feature type="modified residue" description="N6-glutaryllysine" evidence="1">
    <location>
        <position position="869"/>
    </location>
</feature>
<feature type="modified residue" description="N6-acetyllysine; alternate" evidence="2">
    <location>
        <position position="875"/>
    </location>
</feature>
<feature type="modified residue" description="N6-glutaryllysine; alternate" evidence="1">
    <location>
        <position position="875"/>
    </location>
</feature>
<feature type="modified residue" description="N6-succinyllysine; alternate" evidence="2">
    <location>
        <position position="875"/>
    </location>
</feature>
<feature type="modified residue" description="N6-acetyllysine; alternate" evidence="2">
    <location>
        <position position="889"/>
    </location>
</feature>
<feature type="modified residue" description="N6-glutaryllysine; alternate" evidence="1">
    <location>
        <position position="889"/>
    </location>
</feature>
<feature type="modified residue" description="N6-succinyllysine; alternate" evidence="2">
    <location>
        <position position="889"/>
    </location>
</feature>
<feature type="modified residue" description="N6-acetyllysine; alternate" evidence="2">
    <location>
        <position position="892"/>
    </location>
</feature>
<feature type="modified residue" description="N6-glutaryllysine; alternate" evidence="1">
    <location>
        <position position="892"/>
    </location>
</feature>
<feature type="modified residue" description="N6-succinyllysine; alternate" evidence="2">
    <location>
        <position position="892"/>
    </location>
</feature>
<feature type="modified residue" description="Phosphoserine" evidence="8">
    <location>
        <position position="896"/>
    </location>
</feature>
<feature type="modified residue" description="Phosphoserine" evidence="8">
    <location>
        <position position="898"/>
    </location>
</feature>
<feature type="modified residue" description="N6-acetyllysine; alternate" evidence="2">
    <location>
        <position position="908"/>
    </location>
</feature>
<feature type="modified residue" description="N6-glutaryllysine; alternate" evidence="1">
    <location>
        <position position="908"/>
    </location>
</feature>
<feature type="modified residue" description="N6-acetyllysine; alternate" evidence="2">
    <location>
        <position position="915"/>
    </location>
</feature>
<feature type="modified residue" description="N6-glutaryllysine; alternate" evidence="1">
    <location>
        <position position="915"/>
    </location>
</feature>
<feature type="modified residue" description="N6-succinyllysine; alternate" evidence="2">
    <location>
        <position position="915"/>
    </location>
</feature>
<feature type="modified residue" description="N6-acetyllysine; alternate" evidence="2">
    <location>
        <position position="919"/>
    </location>
</feature>
<feature type="modified residue" description="N6-glutaryllysine; alternate" evidence="1">
    <location>
        <position position="919"/>
    </location>
</feature>
<feature type="modified residue" description="N6-succinyllysine; alternate" evidence="2">
    <location>
        <position position="919"/>
    </location>
</feature>
<feature type="modified residue" description="N6-acetyllysine" evidence="2">
    <location>
        <position position="935"/>
    </location>
</feature>
<feature type="modified residue" description="Phosphoserine" evidence="8">
    <location>
        <position position="1036"/>
    </location>
</feature>
<feature type="modified residue" description="N6-acetyllysine; alternate" evidence="2">
    <location>
        <position position="1074"/>
    </location>
</feature>
<feature type="modified residue" description="N6-glutaryllysine; alternate" evidence="1">
    <location>
        <position position="1074"/>
    </location>
</feature>
<feature type="modified residue" description="N6-succinyllysine; alternate" evidence="2">
    <location>
        <position position="1074"/>
    </location>
</feature>
<feature type="modified residue" description="Phosphoserine" evidence="1">
    <location>
        <position position="1079"/>
    </location>
</feature>
<feature type="modified residue" description="Phosphoserine" evidence="8">
    <location>
        <position position="1090"/>
    </location>
</feature>
<feature type="modified residue" description="Phosphoserine" evidence="8">
    <location>
        <position position="1093"/>
    </location>
</feature>
<feature type="modified residue" description="N6-acetyllysine; alternate" evidence="2">
    <location>
        <position position="1100"/>
    </location>
</feature>
<feature type="modified residue" description="N6-succinyllysine; alternate" evidence="2">
    <location>
        <position position="1100"/>
    </location>
</feature>
<feature type="modified residue" description="N6-succinyllysine" evidence="2">
    <location>
        <position position="1149"/>
    </location>
</feature>
<feature type="modified residue" description="N6-acetyllysine; alternate" evidence="2">
    <location>
        <position position="1168"/>
    </location>
</feature>
<feature type="modified residue" description="N6-glutaryllysine; alternate" evidence="1">
    <location>
        <position position="1168"/>
    </location>
</feature>
<feature type="modified residue" description="N6-succinyllysine; alternate" evidence="2">
    <location>
        <position position="1168"/>
    </location>
</feature>
<feature type="modified residue" description="N6-acetyllysine; alternate" evidence="2">
    <location>
        <position position="1183"/>
    </location>
</feature>
<feature type="modified residue" description="N6-glutaryllysine; alternate" evidence="1">
    <location>
        <position position="1183"/>
    </location>
</feature>
<feature type="modified residue" description="N6-succinyllysine; alternate" evidence="2">
    <location>
        <position position="1183"/>
    </location>
</feature>
<feature type="modified residue" description="Phosphoserine" evidence="1">
    <location>
        <position position="1203"/>
    </location>
</feature>
<feature type="modified residue" description="N6-acetyllysine" evidence="2">
    <location>
        <position position="1222"/>
    </location>
</feature>
<feature type="modified residue" description="N6-glutaryllysine" evidence="1">
    <location>
        <position position="1224"/>
    </location>
</feature>
<feature type="modified residue" description="N6-acetyllysine; alternate" evidence="2">
    <location>
        <position position="1232"/>
    </location>
</feature>
<feature type="modified residue" description="N6-succinyllysine; alternate" evidence="2">
    <location>
        <position position="1232"/>
    </location>
</feature>
<feature type="modified residue" description="N6-acetyllysine; alternate" evidence="2">
    <location>
        <position position="1269"/>
    </location>
</feature>
<feature type="modified residue" description="N6-succinyllysine; alternate" evidence="2">
    <location>
        <position position="1269"/>
    </location>
</feature>
<feature type="modified residue" description="N6-acetyllysine; alternate" evidence="2">
    <location>
        <position position="1291"/>
    </location>
</feature>
<feature type="modified residue" description="N6-succinyllysine; alternate" evidence="2">
    <location>
        <position position="1291"/>
    </location>
</feature>
<feature type="modified residue" description="N6-acetyllysine; alternate" evidence="2">
    <location>
        <position position="1356"/>
    </location>
</feature>
<feature type="modified residue" description="N6-glutaryllysine; alternate" evidence="1">
    <location>
        <position position="1356"/>
    </location>
</feature>
<feature type="modified residue" description="N6-succinyllysine; alternate" evidence="2">
    <location>
        <position position="1356"/>
    </location>
</feature>
<feature type="modified residue" description="N6-glutaryllysine; alternate" evidence="1">
    <location>
        <position position="1360"/>
    </location>
</feature>
<feature type="modified residue" description="N6-succinyllysine; alternate" evidence="2">
    <location>
        <position position="1360"/>
    </location>
</feature>
<feature type="modified residue" description="Phosphoserine" evidence="1">
    <location>
        <position position="1419"/>
    </location>
</feature>
<feature type="modified residue" description="Phosphoserine" evidence="8">
    <location>
        <position position="1431"/>
    </location>
</feature>
<feature type="modified residue" description="N6-acetyllysine; alternate" evidence="2">
    <location>
        <position position="1444"/>
    </location>
</feature>
<feature type="modified residue" description="N6-succinyllysine; alternate" evidence="2">
    <location>
        <position position="1444"/>
    </location>
</feature>
<feature type="modified residue" description="N6-acetyllysine; alternate" evidence="2">
    <location>
        <position position="1471"/>
    </location>
</feature>
<feature type="modified residue" description="N6-succinyllysine; alternate" evidence="2">
    <location>
        <position position="1471"/>
    </location>
</feature>
<feature type="modified residue" description="N6-acetyllysine; alternate" evidence="2">
    <location>
        <position position="1479"/>
    </location>
</feature>
<feature type="modified residue" description="N6-glutaryllysine; alternate" evidence="1">
    <location>
        <position position="1479"/>
    </location>
</feature>
<feature type="modified residue" description="N6-succinyllysine; alternate" evidence="2">
    <location>
        <position position="1479"/>
    </location>
</feature>
<feature type="modified residue" description="N6-acetyllysine; alternate" evidence="2">
    <location>
        <position position="1486"/>
    </location>
</feature>
<feature type="modified residue" description="N6-glutaryllysine; alternate" evidence="1">
    <location>
        <position position="1486"/>
    </location>
</feature>
<feature type="modified residue" description="N6-succinyllysine; alternate" evidence="2">
    <location>
        <position position="1486"/>
    </location>
</feature>
<feature type="glycosylation site" description="O-linked (GlcNAc) serine; alternate" evidence="6">
    <location>
        <position position="537"/>
    </location>
</feature>
<feature type="glycosylation site" description="O-linked (GlcNAc) serine" evidence="6">
    <location>
        <position position="1331"/>
    </location>
</feature>
<feature type="glycosylation site" description="O-linked (GlcNAc) threonine" evidence="6">
    <location>
        <position position="1332"/>
    </location>
</feature>
<feature type="mutagenesis site" description="400-fold increase in the activation constant of NAG. 3-fold decrease in the reaction rate at saturation of NAG." evidence="4">
    <original>T</original>
    <variation>V</variation>
    <location>
        <position position="1391"/>
    </location>
</feature>
<feature type="mutagenesis site" description="900-fold increase in the activation constant of NAG. 3-fold decrease in the reaction rate at saturation of NAG." evidence="4">
    <original>T</original>
    <variation>A</variation>
    <location>
        <position position="1394"/>
    </location>
</feature>
<feature type="mutagenesis site" description="60-fold increase in the activation constant of NAG." evidence="4">
    <original>W</original>
    <variation>K</variation>
    <location>
        <position position="1410"/>
    </location>
</feature>
<feature type="mutagenesis site" description="70-fold increase in the activation constant of NAG." evidence="4">
    <original>N</original>
    <variation>D</variation>
    <location>
        <position position="1437"/>
    </location>
</feature>
<feature type="mutagenesis site" description="110-fold increase in the activation constant of NAG. Modifies the specificity for the activator: Binds Phe-NAG considerably better than NAG." evidence="4">
    <original>N</original>
    <variation>D</variation>
    <location>
        <position position="1440"/>
    </location>
</feature>
<name>CPSM_RAT</name>
<proteinExistence type="evidence at protein level"/>
<comment type="function">
    <text>Involved in the urea cycle of ureotelic animals where the enzyme plays an important role in removing excess ammonia from the cell.</text>
</comment>
<comment type="catalytic activity">
    <reaction evidence="4">
        <text>hydrogencarbonate + NH4(+) + 2 ATP = carbamoyl phosphate + 2 ADP + phosphate + 2 H(+)</text>
        <dbReference type="Rhea" id="RHEA:18029"/>
        <dbReference type="ChEBI" id="CHEBI:15378"/>
        <dbReference type="ChEBI" id="CHEBI:17544"/>
        <dbReference type="ChEBI" id="CHEBI:28938"/>
        <dbReference type="ChEBI" id="CHEBI:30616"/>
        <dbReference type="ChEBI" id="CHEBI:43474"/>
        <dbReference type="ChEBI" id="CHEBI:58228"/>
        <dbReference type="ChEBI" id="CHEBI:456216"/>
        <dbReference type="EC" id="6.3.4.16"/>
    </reaction>
</comment>
<comment type="activity regulation">
    <text evidence="4">Requires N-acetyl-L-glutamate (NAG) as an allosteric activator. N-acetyl-L-beta-phenylglutamate (Phe-NAG) can also activate CPSase I, but with an activation constant that is 2-fold higher than that for NAG.</text>
</comment>
<comment type="biophysicochemical properties">
    <kinetics>
        <KM evidence="4">1.06 mM for ATP</KM>
        <KM evidence="4">6.43 mM for HCO(3)(-)</KM>
        <KM evidence="4">1.07 mM for NH(4)(+)</KM>
        <text>The activation constant Ka of N-acetyl-L-glutamate for the reaction is 0.11 mM.</text>
    </kinetics>
</comment>
<comment type="subunit">
    <text evidence="1">Can form homooligomers (monomers as predominant form and dimers).</text>
</comment>
<comment type="subcellular location">
    <subcellularLocation>
        <location>Mitochondrion</location>
    </subcellularLocation>
    <subcellularLocation>
        <location evidence="1">Nucleus</location>
        <location evidence="1">Nucleolus</location>
    </subcellularLocation>
    <subcellularLocation>
        <location evidence="2">Cell membrane</location>
        <topology evidence="7">Peripheral membrane protein</topology>
        <orientation evidence="2">Extracellular side</orientation>
    </subcellularLocation>
    <text evidence="2">Localizes to the cell surface of hepatocytes.</text>
</comment>
<comment type="tissue specificity">
    <text>Primarily in the liver and small intestine.</text>
</comment>
<comment type="domain">
    <text>The type-1 glutamine amidotransferase domain is defective.</text>
</comment>
<comment type="PTM">
    <text evidence="5">50% of the mature protein that was isolated had Leu-39 as its N-terminal residue and 50% had Ser-40 suggesting two adjacent processing sites. However, the possibility of proteolytic removal of Leu-39 during the isolation of the enzyme cannot be excluded. Undergoes proteolytic cleavage in the C-terminal region corresponding to the loss of approximately 12 AA residues from the C-terminus (PubMed:23649895).</text>
</comment>
<comment type="PTM">
    <text evidence="2">Succinylated at Lys-287 and Lys-1291. Desuccinylated at Lys-1291 by SIRT5, leading to activation (By similarity).</text>
</comment>
<comment type="PTM">
    <text evidence="1">Glutarylated. Glutarylation levels increase during fasting. Deglutarylated by SIRT5 at Lys-55, Lys-219, Lys-412, Lys-889, Lys-892, Lys-915, Lys-1360 and Lys-1486, leading to activation.</text>
</comment>
<protein>
    <recommendedName>
        <fullName>Carbamoyl-phosphate synthase [ammonia], mitochondrial</fullName>
        <ecNumber>6.3.4.16</ecNumber>
    </recommendedName>
    <alternativeName>
        <fullName>Carbamoyl-phosphate synthetase I</fullName>
        <shortName>CPSase I</shortName>
    </alternativeName>
</protein>
<keyword id="KW-0007">Acetylation</keyword>
<keyword id="KW-0021">Allosteric enzyme</keyword>
<keyword id="KW-0067">ATP-binding</keyword>
<keyword id="KW-1003">Cell membrane</keyword>
<keyword id="KW-0325">Glycoprotein</keyword>
<keyword id="KW-0436">Ligase</keyword>
<keyword id="KW-0472">Membrane</keyword>
<keyword id="KW-0496">Mitochondrion</keyword>
<keyword id="KW-0547">Nucleotide-binding</keyword>
<keyword id="KW-0539">Nucleus</keyword>
<keyword id="KW-0597">Phosphoprotein</keyword>
<keyword id="KW-1185">Reference proteome</keyword>
<keyword id="KW-0677">Repeat</keyword>
<keyword id="KW-0809">Transit peptide</keyword>
<keyword id="KW-0835">Urea cycle</keyword>
<dbReference type="EC" id="6.3.4.16"/>
<dbReference type="EMBL" id="M12335">
    <property type="protein sequence ID" value="AAB59717.1"/>
    <property type="molecule type" value="Genomic_DNA"/>
</dbReference>
<dbReference type="EMBL" id="M11710">
    <property type="protein sequence ID" value="AAB59717.1"/>
    <property type="status" value="JOINED"/>
    <property type="molecule type" value="mRNA"/>
</dbReference>
<dbReference type="EMBL" id="M12318">
    <property type="protein sequence ID" value="AAB59717.1"/>
    <property type="status" value="JOINED"/>
    <property type="molecule type" value="Genomic_DNA"/>
</dbReference>
<dbReference type="EMBL" id="M12319">
    <property type="protein sequence ID" value="AAB59717.1"/>
    <property type="status" value="JOINED"/>
    <property type="molecule type" value="Genomic_DNA"/>
</dbReference>
<dbReference type="EMBL" id="M12320">
    <property type="protein sequence ID" value="AAB59717.1"/>
    <property type="status" value="JOINED"/>
    <property type="molecule type" value="Genomic_DNA"/>
</dbReference>
<dbReference type="EMBL" id="M12321">
    <property type="protein sequence ID" value="AAB59717.1"/>
    <property type="status" value="JOINED"/>
    <property type="molecule type" value="Genomic_DNA"/>
</dbReference>
<dbReference type="EMBL" id="M12322">
    <property type="protein sequence ID" value="AAB59717.1"/>
    <property type="status" value="JOINED"/>
    <property type="molecule type" value="Genomic_DNA"/>
</dbReference>
<dbReference type="EMBL" id="M12323">
    <property type="protein sequence ID" value="AAB59717.1"/>
    <property type="status" value="JOINED"/>
    <property type="molecule type" value="Genomic_DNA"/>
</dbReference>
<dbReference type="EMBL" id="M12324">
    <property type="protein sequence ID" value="AAB59717.1"/>
    <property type="status" value="JOINED"/>
    <property type="molecule type" value="Genomic_DNA"/>
</dbReference>
<dbReference type="EMBL" id="M12325">
    <property type="protein sequence ID" value="AAB59717.1"/>
    <property type="status" value="JOINED"/>
    <property type="molecule type" value="Genomic_DNA"/>
</dbReference>
<dbReference type="EMBL" id="M12326">
    <property type="protein sequence ID" value="AAB59717.1"/>
    <property type="status" value="JOINED"/>
    <property type="molecule type" value="mRNA"/>
</dbReference>
<dbReference type="EMBL" id="M12327">
    <property type="protein sequence ID" value="AAB59717.1"/>
    <property type="status" value="JOINED"/>
    <property type="molecule type" value="Genomic_DNA"/>
</dbReference>
<dbReference type="EMBL" id="M12328">
    <property type="protein sequence ID" value="AAB59717.1"/>
    <property type="status" value="JOINED"/>
    <property type="molecule type" value="Genomic_DNA"/>
</dbReference>
<dbReference type="EMBL" id="J02805">
    <property type="protein sequence ID" value="AAA40959.1"/>
    <property type="molecule type" value="Genomic_DNA"/>
</dbReference>
<dbReference type="PIR" id="A28481">
    <property type="entry name" value="SYRTCA"/>
</dbReference>
<dbReference type="RefSeq" id="NP_058768.1">
    <property type="nucleotide sequence ID" value="NM_017072.2"/>
</dbReference>
<dbReference type="RefSeq" id="XP_017452081.1">
    <property type="nucleotide sequence ID" value="XM_017596592.3"/>
</dbReference>
<dbReference type="SMR" id="P07756"/>
<dbReference type="FunCoup" id="P07756">
    <property type="interactions" value="839"/>
</dbReference>
<dbReference type="IntAct" id="P07756">
    <property type="interactions" value="1"/>
</dbReference>
<dbReference type="STRING" id="10116.ENSRNOP00000019021"/>
<dbReference type="CarbonylDB" id="P07756"/>
<dbReference type="GlyCosmos" id="P07756">
    <property type="glycosylation" value="3 sites, No reported glycans"/>
</dbReference>
<dbReference type="GlyGen" id="P07756">
    <property type="glycosylation" value="4 sites, 1 O-linked glycan (3 sites)"/>
</dbReference>
<dbReference type="iPTMnet" id="P07756"/>
<dbReference type="PhosphoSitePlus" id="P07756"/>
<dbReference type="SwissPalm" id="P07756"/>
<dbReference type="PaxDb" id="10116-ENSRNOP00000019021"/>
<dbReference type="Ensembl" id="ENSRNOT00000019023.6">
    <property type="protein sequence ID" value="ENSRNOP00000019021.4"/>
    <property type="gene ID" value="ENSRNOG00000013704.6"/>
</dbReference>
<dbReference type="GeneID" id="497840"/>
<dbReference type="KEGG" id="rno:497840"/>
<dbReference type="UCSC" id="RGD:2395">
    <property type="organism name" value="rat"/>
</dbReference>
<dbReference type="AGR" id="RGD:2395"/>
<dbReference type="CTD" id="1373"/>
<dbReference type="RGD" id="2395">
    <property type="gene designation" value="Cps1"/>
</dbReference>
<dbReference type="eggNOG" id="KOG0370">
    <property type="taxonomic scope" value="Eukaryota"/>
</dbReference>
<dbReference type="GeneTree" id="ENSGT00940000157192"/>
<dbReference type="HOGENOM" id="CLU_000513_0_2_1"/>
<dbReference type="InParanoid" id="P07756"/>
<dbReference type="OMA" id="FPFNKFP"/>
<dbReference type="OrthoDB" id="434at2759"/>
<dbReference type="PhylomeDB" id="P07756"/>
<dbReference type="Reactome" id="R-RNO-70635">
    <property type="pathway name" value="Urea cycle"/>
</dbReference>
<dbReference type="SABIO-RK" id="P07756"/>
<dbReference type="PRO" id="PR:P07756"/>
<dbReference type="Proteomes" id="UP000002494">
    <property type="component" value="Chromosome 9"/>
</dbReference>
<dbReference type="Bgee" id="ENSRNOG00000013704">
    <property type="expression patterns" value="Expressed in liver and 16 other cell types or tissues"/>
</dbReference>
<dbReference type="GO" id="GO:0005737">
    <property type="term" value="C:cytoplasm"/>
    <property type="evidence" value="ECO:0000318"/>
    <property type="project" value="GO_Central"/>
</dbReference>
<dbReference type="GO" id="GO:0005829">
    <property type="term" value="C:cytosol"/>
    <property type="evidence" value="ECO:0000314"/>
    <property type="project" value="RGD"/>
</dbReference>
<dbReference type="GO" id="GO:0005743">
    <property type="term" value="C:mitochondrial inner membrane"/>
    <property type="evidence" value="ECO:0000314"/>
    <property type="project" value="RGD"/>
</dbReference>
<dbReference type="GO" id="GO:0042645">
    <property type="term" value="C:mitochondrial nucleoid"/>
    <property type="evidence" value="ECO:0000266"/>
    <property type="project" value="RGD"/>
</dbReference>
<dbReference type="GO" id="GO:0005739">
    <property type="term" value="C:mitochondrion"/>
    <property type="evidence" value="ECO:0000314"/>
    <property type="project" value="HGNC-UCL"/>
</dbReference>
<dbReference type="GO" id="GO:0005730">
    <property type="term" value="C:nucleolus"/>
    <property type="evidence" value="ECO:0007669"/>
    <property type="project" value="UniProtKB-SubCell"/>
</dbReference>
<dbReference type="GO" id="GO:0005886">
    <property type="term" value="C:plasma membrane"/>
    <property type="evidence" value="ECO:0007669"/>
    <property type="project" value="UniProtKB-SubCell"/>
</dbReference>
<dbReference type="GO" id="GO:0032991">
    <property type="term" value="C:protein-containing complex"/>
    <property type="evidence" value="ECO:0000314"/>
    <property type="project" value="RGD"/>
</dbReference>
<dbReference type="GO" id="GO:0005524">
    <property type="term" value="F:ATP binding"/>
    <property type="evidence" value="ECO:0000314"/>
    <property type="project" value="RGD"/>
</dbReference>
<dbReference type="GO" id="GO:0005509">
    <property type="term" value="F:calcium ion binding"/>
    <property type="evidence" value="ECO:0000353"/>
    <property type="project" value="RGD"/>
</dbReference>
<dbReference type="GO" id="GO:0004087">
    <property type="term" value="F:carbamoyl-phosphate synthase (ammonia) activity"/>
    <property type="evidence" value="ECO:0000314"/>
    <property type="project" value="RGD"/>
</dbReference>
<dbReference type="GO" id="GO:0004088">
    <property type="term" value="F:carbamoyl-phosphate synthase (glutamine-hydrolyzing) activity"/>
    <property type="evidence" value="ECO:0007669"/>
    <property type="project" value="InterPro"/>
</dbReference>
<dbReference type="GO" id="GO:0004175">
    <property type="term" value="F:endopeptidase activity"/>
    <property type="evidence" value="ECO:0000314"/>
    <property type="project" value="RGD"/>
</dbReference>
<dbReference type="GO" id="GO:0016595">
    <property type="term" value="F:glutamate binding"/>
    <property type="evidence" value="ECO:0000353"/>
    <property type="project" value="RGD"/>
</dbReference>
<dbReference type="GO" id="GO:0046872">
    <property type="term" value="F:metal ion binding"/>
    <property type="evidence" value="ECO:0000266"/>
    <property type="project" value="RGD"/>
</dbReference>
<dbReference type="GO" id="GO:0072341">
    <property type="term" value="F:modified amino acid binding"/>
    <property type="evidence" value="ECO:0000266"/>
    <property type="project" value="RGD"/>
</dbReference>
<dbReference type="GO" id="GO:0005543">
    <property type="term" value="F:phospholipid binding"/>
    <property type="evidence" value="ECO:0000314"/>
    <property type="project" value="RGD"/>
</dbReference>
<dbReference type="GO" id="GO:0030955">
    <property type="term" value="F:potassium ion binding"/>
    <property type="evidence" value="ECO:0000266"/>
    <property type="project" value="RGD"/>
</dbReference>
<dbReference type="GO" id="GO:0044877">
    <property type="term" value="F:protein-containing complex binding"/>
    <property type="evidence" value="ECO:0000314"/>
    <property type="project" value="RGD"/>
</dbReference>
<dbReference type="GO" id="GO:0036094">
    <property type="term" value="F:small molecule binding"/>
    <property type="evidence" value="ECO:0000266"/>
    <property type="project" value="RGD"/>
</dbReference>
<dbReference type="GO" id="GO:0006207">
    <property type="term" value="P:'de novo' pyrimidine nucleobase biosynthetic process"/>
    <property type="evidence" value="ECO:0007669"/>
    <property type="project" value="InterPro"/>
</dbReference>
<dbReference type="GO" id="GO:0070409">
    <property type="term" value="P:carbamoyl phosphate biosynthetic process"/>
    <property type="evidence" value="ECO:0000266"/>
    <property type="project" value="RGD"/>
</dbReference>
<dbReference type="GO" id="GO:0071242">
    <property type="term" value="P:cellular response to ammonium ion"/>
    <property type="evidence" value="ECO:0000266"/>
    <property type="project" value="RGD"/>
</dbReference>
<dbReference type="GO" id="GO:0071320">
    <property type="term" value="P:cellular response to cAMP"/>
    <property type="evidence" value="ECO:0000270"/>
    <property type="project" value="RGD"/>
</dbReference>
<dbReference type="GO" id="GO:0044344">
    <property type="term" value="P:cellular response to fibroblast growth factor stimulus"/>
    <property type="evidence" value="ECO:0000270"/>
    <property type="project" value="RGD"/>
</dbReference>
<dbReference type="GO" id="GO:0071377">
    <property type="term" value="P:cellular response to glucagon stimulus"/>
    <property type="evidence" value="ECO:0000270"/>
    <property type="project" value="RGD"/>
</dbReference>
<dbReference type="GO" id="GO:0071400">
    <property type="term" value="P:cellular response to oleic acid"/>
    <property type="evidence" value="ECO:0000270"/>
    <property type="project" value="RGD"/>
</dbReference>
<dbReference type="GO" id="GO:0006541">
    <property type="term" value="P:glutamine metabolic process"/>
    <property type="evidence" value="ECO:0000318"/>
    <property type="project" value="GO_Central"/>
</dbReference>
<dbReference type="GO" id="GO:0070365">
    <property type="term" value="P:hepatocyte differentiation"/>
    <property type="evidence" value="ECO:0000270"/>
    <property type="project" value="RGD"/>
</dbReference>
<dbReference type="GO" id="GO:0050667">
    <property type="term" value="P:homocysteine metabolic process"/>
    <property type="evidence" value="ECO:0000266"/>
    <property type="project" value="RGD"/>
</dbReference>
<dbReference type="GO" id="GO:0001889">
    <property type="term" value="P:liver development"/>
    <property type="evidence" value="ECO:0000270"/>
    <property type="project" value="RGD"/>
</dbReference>
<dbReference type="GO" id="GO:0007494">
    <property type="term" value="P:midgut development"/>
    <property type="evidence" value="ECO:0000270"/>
    <property type="project" value="RGD"/>
</dbReference>
<dbReference type="GO" id="GO:0055081">
    <property type="term" value="P:monoatomic anion homeostasis"/>
    <property type="evidence" value="ECO:0000314"/>
    <property type="project" value="RGD"/>
</dbReference>
<dbReference type="GO" id="GO:0046209">
    <property type="term" value="P:nitric oxide metabolic process"/>
    <property type="evidence" value="ECO:0000266"/>
    <property type="project" value="RGD"/>
</dbReference>
<dbReference type="GO" id="GO:0097305">
    <property type="term" value="P:response to alcohol"/>
    <property type="evidence" value="ECO:0000270"/>
    <property type="project" value="RGD"/>
</dbReference>
<dbReference type="GO" id="GO:0014075">
    <property type="term" value="P:response to amine"/>
    <property type="evidence" value="ECO:0000270"/>
    <property type="project" value="RGD"/>
</dbReference>
<dbReference type="GO" id="GO:0043200">
    <property type="term" value="P:response to amino acid"/>
    <property type="evidence" value="ECO:0000270"/>
    <property type="project" value="RGD"/>
</dbReference>
<dbReference type="GO" id="GO:0051591">
    <property type="term" value="P:response to cAMP"/>
    <property type="evidence" value="ECO:0000270"/>
    <property type="project" value="RGD"/>
</dbReference>
<dbReference type="GO" id="GO:0071548">
    <property type="term" value="P:response to dexamethasone"/>
    <property type="evidence" value="ECO:0000270"/>
    <property type="project" value="RGD"/>
</dbReference>
<dbReference type="GO" id="GO:0032094">
    <property type="term" value="P:response to food"/>
    <property type="evidence" value="ECO:0000270"/>
    <property type="project" value="RGD"/>
</dbReference>
<dbReference type="GO" id="GO:0033762">
    <property type="term" value="P:response to glucagon"/>
    <property type="evidence" value="ECO:0000270"/>
    <property type="project" value="RGD"/>
</dbReference>
<dbReference type="GO" id="GO:0051384">
    <property type="term" value="P:response to glucocorticoid"/>
    <property type="evidence" value="ECO:0000270"/>
    <property type="project" value="RGD"/>
</dbReference>
<dbReference type="GO" id="GO:0060416">
    <property type="term" value="P:response to growth hormone"/>
    <property type="evidence" value="ECO:0000270"/>
    <property type="project" value="RGD"/>
</dbReference>
<dbReference type="GO" id="GO:0032496">
    <property type="term" value="P:response to lipopolysaccharide"/>
    <property type="evidence" value="ECO:0000270"/>
    <property type="project" value="RGD"/>
</dbReference>
<dbReference type="GO" id="GO:0034201">
    <property type="term" value="P:response to oleic acid"/>
    <property type="evidence" value="ECO:0000270"/>
    <property type="project" value="RGD"/>
</dbReference>
<dbReference type="GO" id="GO:0042594">
    <property type="term" value="P:response to starvation"/>
    <property type="evidence" value="ECO:0000270"/>
    <property type="project" value="RGD"/>
</dbReference>
<dbReference type="GO" id="GO:0048545">
    <property type="term" value="P:response to steroid hormone"/>
    <property type="evidence" value="ECO:0000270"/>
    <property type="project" value="RGD"/>
</dbReference>
<dbReference type="GO" id="GO:0009636">
    <property type="term" value="P:response to toxic substance"/>
    <property type="evidence" value="ECO:0000270"/>
    <property type="project" value="RGD"/>
</dbReference>
<dbReference type="GO" id="GO:0009410">
    <property type="term" value="P:response to xenobiotic stimulus"/>
    <property type="evidence" value="ECO:0000270"/>
    <property type="project" value="RGD"/>
</dbReference>
<dbReference type="GO" id="GO:0010043">
    <property type="term" value="P:response to zinc ion"/>
    <property type="evidence" value="ECO:0000270"/>
    <property type="project" value="RGD"/>
</dbReference>
<dbReference type="GO" id="GO:0019433">
    <property type="term" value="P:triglyceride catabolic process"/>
    <property type="evidence" value="ECO:0000266"/>
    <property type="project" value="RGD"/>
</dbReference>
<dbReference type="GO" id="GO:0000050">
    <property type="term" value="P:urea cycle"/>
    <property type="evidence" value="ECO:0000314"/>
    <property type="project" value="RGD"/>
</dbReference>
<dbReference type="GO" id="GO:0042311">
    <property type="term" value="P:vasodilation"/>
    <property type="evidence" value="ECO:0000266"/>
    <property type="project" value="RGD"/>
</dbReference>
<dbReference type="CDD" id="cd01744">
    <property type="entry name" value="GATase1_CPSase"/>
    <property type="match status" value="1"/>
</dbReference>
<dbReference type="CDD" id="cd01423">
    <property type="entry name" value="MGS_CPS_I_III"/>
    <property type="match status" value="1"/>
</dbReference>
<dbReference type="FunFam" id="3.30.470.20:FF:000030">
    <property type="entry name" value="Carbamoyl-phosphate synthase 1, mitochondrial"/>
    <property type="match status" value="1"/>
</dbReference>
<dbReference type="FunFam" id="3.40.50.20:FF:000012">
    <property type="entry name" value="Carbamoyl-phosphate synthase 1, mitochondrial"/>
    <property type="match status" value="1"/>
</dbReference>
<dbReference type="FunFam" id="3.40.50.880:FF:000006">
    <property type="entry name" value="Carbamoyl-phosphate synthase 1, mitochondrial"/>
    <property type="match status" value="1"/>
</dbReference>
<dbReference type="FunFam" id="3.50.30.20:FF:000002">
    <property type="entry name" value="Carbamoyl-phosphate synthase 1, mitochondrial"/>
    <property type="match status" value="1"/>
</dbReference>
<dbReference type="FunFam" id="3.40.50.1380:FF:000010">
    <property type="entry name" value="carbamoyl-phosphate synthase [ammonia], mitochondrial"/>
    <property type="match status" value="1"/>
</dbReference>
<dbReference type="FunFam" id="1.10.1030.10:FF:000001">
    <property type="entry name" value="Carbamoyl-phosphate synthase large chain"/>
    <property type="match status" value="1"/>
</dbReference>
<dbReference type="FunFam" id="3.30.1490.20:FF:000001">
    <property type="entry name" value="Carbamoyl-phosphate synthase large chain"/>
    <property type="match status" value="1"/>
</dbReference>
<dbReference type="FunFam" id="3.30.470.20:FF:000001">
    <property type="entry name" value="Carbamoyl-phosphate synthase large chain"/>
    <property type="match status" value="1"/>
</dbReference>
<dbReference type="FunFam" id="3.40.50.20:FF:000002">
    <property type="entry name" value="Carbamoyl-phosphate synthase large chain"/>
    <property type="match status" value="1"/>
</dbReference>
<dbReference type="Gene3D" id="3.40.50.20">
    <property type="match status" value="2"/>
</dbReference>
<dbReference type="Gene3D" id="3.40.50.880">
    <property type="match status" value="1"/>
</dbReference>
<dbReference type="Gene3D" id="3.30.1490.20">
    <property type="entry name" value="ATP-grasp fold, A domain"/>
    <property type="match status" value="1"/>
</dbReference>
<dbReference type="Gene3D" id="3.30.470.20">
    <property type="entry name" value="ATP-grasp fold, B domain"/>
    <property type="match status" value="2"/>
</dbReference>
<dbReference type="Gene3D" id="3.50.30.20">
    <property type="entry name" value="Carbamoyl-phosphate synthase small subunit, N-terminal domain"/>
    <property type="match status" value="1"/>
</dbReference>
<dbReference type="Gene3D" id="1.10.1030.10">
    <property type="entry name" value="Carbamoyl-phosphate synthetase, large subunit oligomerisation domain"/>
    <property type="match status" value="1"/>
</dbReference>
<dbReference type="Gene3D" id="3.40.50.1380">
    <property type="entry name" value="Methylglyoxal synthase-like domain"/>
    <property type="match status" value="1"/>
</dbReference>
<dbReference type="HAMAP" id="MF_01209">
    <property type="entry name" value="CPSase_S_chain"/>
    <property type="match status" value="1"/>
</dbReference>
<dbReference type="InterPro" id="IPR011761">
    <property type="entry name" value="ATP-grasp"/>
</dbReference>
<dbReference type="InterPro" id="IPR013815">
    <property type="entry name" value="ATP_grasp_subdomain_1"/>
</dbReference>
<dbReference type="InterPro" id="IPR006275">
    <property type="entry name" value="CarbamoylP_synth_lsu"/>
</dbReference>
<dbReference type="InterPro" id="IPR005480">
    <property type="entry name" value="CarbamoylP_synth_lsu_oligo"/>
</dbReference>
<dbReference type="InterPro" id="IPR036897">
    <property type="entry name" value="CarbamoylP_synth_lsu_oligo_sf"/>
</dbReference>
<dbReference type="InterPro" id="IPR006274">
    <property type="entry name" value="CarbamoylP_synth_ssu"/>
</dbReference>
<dbReference type="InterPro" id="IPR002474">
    <property type="entry name" value="CarbamoylP_synth_ssu_N"/>
</dbReference>
<dbReference type="InterPro" id="IPR036480">
    <property type="entry name" value="CarbP_synth_ssu_N_sf"/>
</dbReference>
<dbReference type="InterPro" id="IPR005479">
    <property type="entry name" value="CbamoylP_synth_lsu-like_ATP-bd"/>
</dbReference>
<dbReference type="InterPro" id="IPR005483">
    <property type="entry name" value="CbamoylP_synth_lsu_CPSase_dom"/>
</dbReference>
<dbReference type="InterPro" id="IPR029062">
    <property type="entry name" value="Class_I_gatase-like"/>
</dbReference>
<dbReference type="InterPro" id="IPR035686">
    <property type="entry name" value="CPSase_GATase1"/>
</dbReference>
<dbReference type="InterPro" id="IPR017926">
    <property type="entry name" value="GATASE"/>
</dbReference>
<dbReference type="InterPro" id="IPR011607">
    <property type="entry name" value="MGS-like_dom"/>
</dbReference>
<dbReference type="InterPro" id="IPR036914">
    <property type="entry name" value="MGS-like_dom_sf"/>
</dbReference>
<dbReference type="InterPro" id="IPR016185">
    <property type="entry name" value="PreATP-grasp_dom_sf"/>
</dbReference>
<dbReference type="NCBIfam" id="TIGR01369">
    <property type="entry name" value="CPSaseII_lrg"/>
    <property type="match status" value="1"/>
</dbReference>
<dbReference type="NCBIfam" id="TIGR01368">
    <property type="entry name" value="CPSaseIIsmall"/>
    <property type="match status" value="1"/>
</dbReference>
<dbReference type="NCBIfam" id="NF003671">
    <property type="entry name" value="PRK05294.1"/>
    <property type="match status" value="1"/>
</dbReference>
<dbReference type="NCBIfam" id="NF009455">
    <property type="entry name" value="PRK12815.1"/>
    <property type="match status" value="1"/>
</dbReference>
<dbReference type="NCBIfam" id="NF009475">
    <property type="entry name" value="PRK12838.1"/>
    <property type="match status" value="1"/>
</dbReference>
<dbReference type="PANTHER" id="PTHR11405:SF53">
    <property type="entry name" value="CARBAMOYL-PHOSPHATE SYNTHASE [AMMONIA], MITOCHONDRIAL"/>
    <property type="match status" value="1"/>
</dbReference>
<dbReference type="PANTHER" id="PTHR11405">
    <property type="entry name" value="CARBAMOYLTRANSFERASE FAMILY MEMBER"/>
    <property type="match status" value="1"/>
</dbReference>
<dbReference type="Pfam" id="PF02786">
    <property type="entry name" value="CPSase_L_D2"/>
    <property type="match status" value="2"/>
</dbReference>
<dbReference type="Pfam" id="PF02787">
    <property type="entry name" value="CPSase_L_D3"/>
    <property type="match status" value="1"/>
</dbReference>
<dbReference type="Pfam" id="PF00988">
    <property type="entry name" value="CPSase_sm_chain"/>
    <property type="match status" value="1"/>
</dbReference>
<dbReference type="Pfam" id="PF00117">
    <property type="entry name" value="GATase"/>
    <property type="match status" value="1"/>
</dbReference>
<dbReference type="Pfam" id="PF02142">
    <property type="entry name" value="MGS"/>
    <property type="match status" value="1"/>
</dbReference>
<dbReference type="PRINTS" id="PR00098">
    <property type="entry name" value="CPSASE"/>
</dbReference>
<dbReference type="PRINTS" id="PR00099">
    <property type="entry name" value="CPSGATASE"/>
</dbReference>
<dbReference type="SMART" id="SM01096">
    <property type="entry name" value="CPSase_L_D3"/>
    <property type="match status" value="1"/>
</dbReference>
<dbReference type="SMART" id="SM01097">
    <property type="entry name" value="CPSase_sm_chain"/>
    <property type="match status" value="1"/>
</dbReference>
<dbReference type="SMART" id="SM00851">
    <property type="entry name" value="MGS"/>
    <property type="match status" value="1"/>
</dbReference>
<dbReference type="SUPFAM" id="SSF48108">
    <property type="entry name" value="Carbamoyl phosphate synthetase, large subunit connection domain"/>
    <property type="match status" value="1"/>
</dbReference>
<dbReference type="SUPFAM" id="SSF52021">
    <property type="entry name" value="Carbamoyl phosphate synthetase, small subunit N-terminal domain"/>
    <property type="match status" value="1"/>
</dbReference>
<dbReference type="SUPFAM" id="SSF52317">
    <property type="entry name" value="Class I glutamine amidotransferase-like"/>
    <property type="match status" value="1"/>
</dbReference>
<dbReference type="SUPFAM" id="SSF56059">
    <property type="entry name" value="Glutathione synthetase ATP-binding domain-like"/>
    <property type="match status" value="2"/>
</dbReference>
<dbReference type="SUPFAM" id="SSF52335">
    <property type="entry name" value="Methylglyoxal synthase-like"/>
    <property type="match status" value="1"/>
</dbReference>
<dbReference type="SUPFAM" id="SSF52440">
    <property type="entry name" value="PreATP-grasp domain"/>
    <property type="match status" value="2"/>
</dbReference>
<dbReference type="PROSITE" id="PS50975">
    <property type="entry name" value="ATP_GRASP"/>
    <property type="match status" value="2"/>
</dbReference>
<dbReference type="PROSITE" id="PS00866">
    <property type="entry name" value="CPSASE_1"/>
    <property type="match status" value="2"/>
</dbReference>
<dbReference type="PROSITE" id="PS00867">
    <property type="entry name" value="CPSASE_2"/>
    <property type="match status" value="2"/>
</dbReference>
<dbReference type="PROSITE" id="PS51273">
    <property type="entry name" value="GATASE_TYPE_1"/>
    <property type="match status" value="1"/>
</dbReference>
<dbReference type="PROSITE" id="PS51855">
    <property type="entry name" value="MGS"/>
    <property type="match status" value="1"/>
</dbReference>
<evidence type="ECO:0000250" key="1">
    <source>
        <dbReference type="UniProtKB" id="P31327"/>
    </source>
</evidence>
<evidence type="ECO:0000250" key="2">
    <source>
        <dbReference type="UniProtKB" id="Q8C196"/>
    </source>
</evidence>
<evidence type="ECO:0000255" key="3">
    <source>
        <dbReference type="PROSITE-ProRule" id="PRU01202"/>
    </source>
</evidence>
<evidence type="ECO:0000269" key="4">
    <source>
    </source>
</evidence>
<evidence type="ECO:0000269" key="5">
    <source>
    </source>
</evidence>
<evidence type="ECO:0000269" key="6">
    <source>
    </source>
</evidence>
<evidence type="ECO:0000305" key="7"/>
<evidence type="ECO:0007744" key="8">
    <source>
    </source>
</evidence>
<accession>P07756</accession>
<sequence>MTRILTACKVVKTLKSGFGLANVTSKRQWDFSRPGIRLLSVKAQTAHIVLEDGTKMKGYSFGHPSSVAGEVVFNTGLGGYSEALTDPAYKGQILTMANPIIGNGGAPDTTARDELGLNKYMESDGIKVAGLLVLNYSHDYNHWLATKSLGQWLQEEKVPAIYGVDTRMLTKIIRDKGTMLGKIEFEGQSVDFVDPNKQNLIAEVSTKDVKVFGKGNPTKVVAVDCGIKNNVIRLLVKRGAEVHLVPWNHDFTQMDYDGLLIAGGPGNPALAQPLIQNVKKILESDRKEPLFGISTGNIITGLAAGAKSYKMSMANRGQNQPVLNITNRQAFITAQNHGYALDNTLPAGWKPLFVNVNDQTNEGIMHESKPFFAVQFHPEVSPGPTDTEYLFDSFFSLIKKGKGTTITSVLPKPALVASRVEVSKVLILGSGGLSIGQAGEFDYSGSQAVKAMKEENVKTVLMNPNIASVQTNEVGLKQADAVYFLPITPQFVTEVIKAERPDGLILGMGGQTALNCGVELFKRGVLKEYGVKVLGTSVESIMATEDRQLFSDKLNEINEKIAPSFAVESMEDALKAADTIGYPVMIRSAYALGGLGSGICPNKETLMDLGTKAFAMTNQILVERSVTGWKEIEYEVVRDADDNCVTVCNMENVDAMGVHTGDSVVVAPAQTLSNAEFQMLRRTSINVVRHLGIVGECNIQFALHPTSMEYCIIEVNARLSRSSALASKATGYPLAFIAAKIALGIPLPEIKNVVSGKTSACFEPSLDYMVTKIPRWDLDRFHGTSSRIGSSMKSVGEVMAIGRTFEESFQKALRMCHPSVDGFTPRLPMNKEWPANLDLRKELSEPSSTRIYAIAKALENNMSLDEIVKLTSIDKWFLYKMRDILNMDKTLKGLNSESVTEETLRQAKEIGFSDKQISKCLGLTEAQTRELRLKKNIHPWVKQIDTLAAEYPSVTNYLYVTYNGQEHDIKFDEHGIMVLGCGPYHIGSSVEFDWCAVSSIRTLRQLGKKTVVVNCNPETVSTDFDECDKLYFEELSLERILDIYHQEACNGCIISVGGQIPNNLAVPLYKNGVKIMGTSPLQIDRAEDRSIFSAVLDELKVAQAPWKAVNTLNEALEFANSVGYPCLLRPSYVLSGSAMNVVFSEDEMKRFLEEATRVSQEHPVVLTKFIEGAREVEMDAVGKEGRVISHAISEHVEDAGVHSGDATLMLPTQTISQGAIEKVKDATRKIAKAFAISGPFNVQFLVKGNDVLVIECNLRASRSFPFVSKTLGVDFIDVATKVMIGESVDEKHLPTLEQPIIPSDYVAIKAPMFSWPRLRDADPILRCEMASTGEVACFGEGIHTAFLKAMLSTGFKIPQKGILIGIQQSFRPRFLGVAEQLHNEGFKLFATEATSDWLNANNVPATPVAWPSQEGQNPSLSSIRKLIRDGSIDLVINLPNNNTKFVHDNYVIRRTAVDSGIALLTNFQVTKLFAEAVQKARTVDSKSLFHYRQYSAGKAA</sequence>
<gene>
    <name type="primary">Cps1</name>
</gene>
<organism>
    <name type="scientific">Rattus norvegicus</name>
    <name type="common">Rat</name>
    <dbReference type="NCBI Taxonomy" id="10116"/>
    <lineage>
        <taxon>Eukaryota</taxon>
        <taxon>Metazoa</taxon>
        <taxon>Chordata</taxon>
        <taxon>Craniata</taxon>
        <taxon>Vertebrata</taxon>
        <taxon>Euteleostomi</taxon>
        <taxon>Mammalia</taxon>
        <taxon>Eutheria</taxon>
        <taxon>Euarchontoglires</taxon>
        <taxon>Glires</taxon>
        <taxon>Rodentia</taxon>
        <taxon>Myomorpha</taxon>
        <taxon>Muroidea</taxon>
        <taxon>Muridae</taxon>
        <taxon>Murinae</taxon>
        <taxon>Rattus</taxon>
    </lineage>
</organism>
<reference key="1">
    <citation type="journal article" date="1985" name="J. Biol. Chem.">
        <title>Characterization and derivation of the gene coding for mitochondrial carbamyl phosphate synthetase I of rat.</title>
        <authorList>
            <person name="Nyunoya H."/>
            <person name="Broglie K.E."/>
            <person name="Widgren E.E."/>
            <person name="Lusty C.J."/>
        </authorList>
    </citation>
    <scope>NUCLEOTIDE SEQUENCE [GENOMIC DNA / MRNA]</scope>
</reference>
<reference key="2">
    <citation type="journal article" date="1987" name="J. Biol. Chem.">
        <title>Rat carbamyl-phosphate synthetase I gene. Promoter sequence and tissue-specific transcriptional regulation in vitro.</title>
        <authorList>
            <person name="Lagace M."/>
            <person name="Howell B.W."/>
            <person name="Burak R."/>
            <person name="Lusty C.J."/>
            <person name="Shore G.C."/>
        </authorList>
    </citation>
    <scope>NUCLEOTIDE SEQUENCE [GENOMIC DNA] OF 1-42</scope>
</reference>
<reference key="3">
    <citation type="journal article" date="2009" name="Biochem. J.">
        <title>Structural insight on the control of urea synthesis: identification of the binding site for N-acetyl-L-glutamate, the essential allosteric activator of mitochondrial carbamoyl phosphate synthetase.</title>
        <authorList>
            <person name="Pekkala S."/>
            <person name="Martinez A.I."/>
            <person name="Barcelona B."/>
            <person name="Gallego J."/>
            <person name="Bendala E."/>
            <person name="Yefimenko I."/>
            <person name="Rubio V."/>
            <person name="Cervera J."/>
        </authorList>
    </citation>
    <scope>CATALYTIC ACTIVITY</scope>
    <scope>ACTIVITY REGULATION</scope>
    <scope>ALLOSTERIC ACTIVATOR NAG BINDING SITE</scope>
    <scope>KINETIC PARAMETERS</scope>
    <scope>MUTAGENESIS OF THR-1391; THR-1394; TRP-1410; ASN-1437 AND ASN-1440</scope>
</reference>
<reference key="4">
    <citation type="journal article" date="2012" name="Nat. Commun.">
        <title>Quantitative maps of protein phosphorylation sites across 14 different rat organs and tissues.</title>
        <authorList>
            <person name="Lundby A."/>
            <person name="Secher A."/>
            <person name="Lage K."/>
            <person name="Nordsborg N.B."/>
            <person name="Dmytriyev A."/>
            <person name="Lundby C."/>
            <person name="Olsen J.V."/>
        </authorList>
    </citation>
    <scope>PHOSPHORYLATION [LARGE SCALE ANALYSIS] AT SER-148; SER-189; SER-537; SER-540; SER-896; SER-898; SER-1036; SER-1090; SER-1093 AND SER-1431</scope>
    <scope>IDENTIFICATION BY MASS SPECTROMETRY [LARGE SCALE ANALYSIS]</scope>
</reference>
<reference key="5">
    <citation type="journal article" date="2013" name="Hum. Mutat.">
        <title>Molecular characterization of carbamoyl-phosphate synthetase (CPS1) deficiency using human recombinant CPS1 as a key tool.</title>
        <authorList>
            <person name="Diez-Fernandez C."/>
            <person name="Martinez A.I."/>
            <person name="Pekkala S."/>
            <person name="Barcelona B."/>
            <person name="Perez-Arellano I."/>
            <person name="Guadalajara A.M."/>
            <person name="Summar M."/>
            <person name="Cervera J."/>
            <person name="Rubio V."/>
        </authorList>
    </citation>
    <scope>PROTEOLYTIC CLEAVAGE</scope>
</reference>
<reference key="6">
    <citation type="journal article" date="2013" name="PLoS ONE">
        <title>Discovery and confirmation of O-GlcNAcylated proteins in rat liver mitochondria by combination of mass spectrometry and immunological methods.</title>
        <authorList>
            <person name="Cao W."/>
            <person name="Cao J."/>
            <person name="Huang J."/>
            <person name="Yao J."/>
            <person name="Yan G."/>
            <person name="Xu H."/>
            <person name="Yang P."/>
        </authorList>
    </citation>
    <scope>GLYCOSYLATION AT SER-537; SER-1331 AND THR-1332</scope>
</reference>